<organism>
    <name type="scientific">Geobacter sulfurreducens (strain ATCC 51573 / DSM 12127 / PCA)</name>
    <dbReference type="NCBI Taxonomy" id="243231"/>
    <lineage>
        <taxon>Bacteria</taxon>
        <taxon>Pseudomonadati</taxon>
        <taxon>Thermodesulfobacteriota</taxon>
        <taxon>Desulfuromonadia</taxon>
        <taxon>Geobacterales</taxon>
        <taxon>Geobacteraceae</taxon>
        <taxon>Geobacter</taxon>
    </lineage>
</organism>
<dbReference type="EC" id="2.3.1.181" evidence="1"/>
<dbReference type="EMBL" id="AE017180">
    <property type="protein sequence ID" value="AAR35807.2"/>
    <property type="molecule type" value="Genomic_DNA"/>
</dbReference>
<dbReference type="RefSeq" id="NP_953480.2">
    <property type="nucleotide sequence ID" value="NC_002939.5"/>
</dbReference>
<dbReference type="RefSeq" id="WP_010943071.1">
    <property type="nucleotide sequence ID" value="NC_002939.5"/>
</dbReference>
<dbReference type="SMR" id="Q74AE2"/>
<dbReference type="FunCoup" id="Q74AE2">
    <property type="interactions" value="350"/>
</dbReference>
<dbReference type="STRING" id="243231.GSU2434"/>
<dbReference type="EnsemblBacteria" id="AAR35807">
    <property type="protein sequence ID" value="AAR35807"/>
    <property type="gene ID" value="GSU2434"/>
</dbReference>
<dbReference type="KEGG" id="gsu:GSU2434"/>
<dbReference type="PATRIC" id="fig|243231.5.peg.2462"/>
<dbReference type="eggNOG" id="COG0321">
    <property type="taxonomic scope" value="Bacteria"/>
</dbReference>
<dbReference type="HOGENOM" id="CLU_035168_1_3_7"/>
<dbReference type="InParanoid" id="Q74AE2"/>
<dbReference type="OrthoDB" id="9787061at2"/>
<dbReference type="UniPathway" id="UPA00538">
    <property type="reaction ID" value="UER00592"/>
</dbReference>
<dbReference type="Proteomes" id="UP000000577">
    <property type="component" value="Chromosome"/>
</dbReference>
<dbReference type="GO" id="GO:0005737">
    <property type="term" value="C:cytoplasm"/>
    <property type="evidence" value="ECO:0007669"/>
    <property type="project" value="UniProtKB-SubCell"/>
</dbReference>
<dbReference type="GO" id="GO:0033819">
    <property type="term" value="F:lipoyl(octanoyl) transferase activity"/>
    <property type="evidence" value="ECO:0000318"/>
    <property type="project" value="GO_Central"/>
</dbReference>
<dbReference type="GO" id="GO:0036211">
    <property type="term" value="P:protein modification process"/>
    <property type="evidence" value="ECO:0007669"/>
    <property type="project" value="InterPro"/>
</dbReference>
<dbReference type="CDD" id="cd16444">
    <property type="entry name" value="LipB"/>
    <property type="match status" value="1"/>
</dbReference>
<dbReference type="Gene3D" id="3.30.930.10">
    <property type="entry name" value="Bira Bifunctional Protein, Domain 2"/>
    <property type="match status" value="1"/>
</dbReference>
<dbReference type="HAMAP" id="MF_00013">
    <property type="entry name" value="LipB"/>
    <property type="match status" value="1"/>
</dbReference>
<dbReference type="InterPro" id="IPR045864">
    <property type="entry name" value="aa-tRNA-synth_II/BPL/LPL"/>
</dbReference>
<dbReference type="InterPro" id="IPR004143">
    <property type="entry name" value="BPL_LPL_catalytic"/>
</dbReference>
<dbReference type="InterPro" id="IPR000544">
    <property type="entry name" value="Octanoyltransferase"/>
</dbReference>
<dbReference type="InterPro" id="IPR020605">
    <property type="entry name" value="Octanoyltransferase_CS"/>
</dbReference>
<dbReference type="NCBIfam" id="TIGR00214">
    <property type="entry name" value="lipB"/>
    <property type="match status" value="1"/>
</dbReference>
<dbReference type="NCBIfam" id="NF010925">
    <property type="entry name" value="PRK14345.1"/>
    <property type="match status" value="1"/>
</dbReference>
<dbReference type="PANTHER" id="PTHR10993:SF7">
    <property type="entry name" value="LIPOYLTRANSFERASE 2, MITOCHONDRIAL-RELATED"/>
    <property type="match status" value="1"/>
</dbReference>
<dbReference type="PANTHER" id="PTHR10993">
    <property type="entry name" value="OCTANOYLTRANSFERASE"/>
    <property type="match status" value="1"/>
</dbReference>
<dbReference type="Pfam" id="PF21948">
    <property type="entry name" value="LplA-B_cat"/>
    <property type="match status" value="1"/>
</dbReference>
<dbReference type="PIRSF" id="PIRSF016262">
    <property type="entry name" value="LPLase"/>
    <property type="match status" value="1"/>
</dbReference>
<dbReference type="SUPFAM" id="SSF55681">
    <property type="entry name" value="Class II aaRS and biotin synthetases"/>
    <property type="match status" value="1"/>
</dbReference>
<dbReference type="PROSITE" id="PS51733">
    <property type="entry name" value="BPL_LPL_CATALYTIC"/>
    <property type="match status" value="1"/>
</dbReference>
<dbReference type="PROSITE" id="PS01313">
    <property type="entry name" value="LIPB"/>
    <property type="match status" value="1"/>
</dbReference>
<accession>Q74AE2</accession>
<sequence length="235" mass="25002">MKIVDLAAMEYAEAFALQERLAADVAAGRAEETLLLLEHPPVYTLGRRGDGGSLPDPSVRPVEINRGGDVTWHGPGQLVGYPILDLGCRGRDLHRYLRFLEQVLMDAAASLGVQAWRVAGRTGIWTEGGKLASIGVGVRRWVTMHGFALNICNDLAPFSRIHPCGIVGCPVTTLSREAGRAITVAEAKAAVAAPFAGLPADALPEQPRDAVQPSSCDDVHAPSTTSRRPPCPLTV</sequence>
<gene>
    <name evidence="1" type="primary">lipB</name>
    <name type="ordered locus">GSU2434</name>
</gene>
<reference key="1">
    <citation type="journal article" date="2003" name="Science">
        <title>Genome of Geobacter sulfurreducens: metal reduction in subsurface environments.</title>
        <authorList>
            <person name="Methe B.A."/>
            <person name="Nelson K.E."/>
            <person name="Eisen J.A."/>
            <person name="Paulsen I.T."/>
            <person name="Nelson W.C."/>
            <person name="Heidelberg J.F."/>
            <person name="Wu D."/>
            <person name="Wu M."/>
            <person name="Ward N.L."/>
            <person name="Beanan M.J."/>
            <person name="Dodson R.J."/>
            <person name="Madupu R."/>
            <person name="Brinkac L.M."/>
            <person name="Daugherty S.C."/>
            <person name="DeBoy R.T."/>
            <person name="Durkin A.S."/>
            <person name="Gwinn M.L."/>
            <person name="Kolonay J.F."/>
            <person name="Sullivan S.A."/>
            <person name="Haft D.H."/>
            <person name="Selengut J."/>
            <person name="Davidsen T.M."/>
            <person name="Zafar N."/>
            <person name="White O."/>
            <person name="Tran B."/>
            <person name="Romero C."/>
            <person name="Forberger H.A."/>
            <person name="Weidman J.F."/>
            <person name="Khouri H.M."/>
            <person name="Feldblyum T.V."/>
            <person name="Utterback T.R."/>
            <person name="Van Aken S.E."/>
            <person name="Lovley D.R."/>
            <person name="Fraser C.M."/>
        </authorList>
    </citation>
    <scope>NUCLEOTIDE SEQUENCE [LARGE SCALE GENOMIC DNA]</scope>
    <source>
        <strain>ATCC 51573 / DSM 12127 / PCA</strain>
    </source>
</reference>
<protein>
    <recommendedName>
        <fullName evidence="1">Octanoyltransferase</fullName>
        <ecNumber evidence="1">2.3.1.181</ecNumber>
    </recommendedName>
    <alternativeName>
        <fullName evidence="1">Lipoate-protein ligase B</fullName>
    </alternativeName>
    <alternativeName>
        <fullName evidence="1">Lipoyl/octanoyl transferase</fullName>
    </alternativeName>
    <alternativeName>
        <fullName evidence="1">Octanoyl-[acyl-carrier-protein]-protein N-octanoyltransferase</fullName>
    </alternativeName>
</protein>
<comment type="function">
    <text evidence="1">Catalyzes the transfer of endogenously produced octanoic acid from octanoyl-acyl-carrier-protein onto the lipoyl domains of lipoate-dependent enzymes. Lipoyl-ACP can also act as a substrate although octanoyl-ACP is likely to be the physiological substrate.</text>
</comment>
<comment type="catalytic activity">
    <reaction evidence="1">
        <text>octanoyl-[ACP] + L-lysyl-[protein] = N(6)-octanoyl-L-lysyl-[protein] + holo-[ACP] + H(+)</text>
        <dbReference type="Rhea" id="RHEA:17665"/>
        <dbReference type="Rhea" id="RHEA-COMP:9636"/>
        <dbReference type="Rhea" id="RHEA-COMP:9685"/>
        <dbReference type="Rhea" id="RHEA-COMP:9752"/>
        <dbReference type="Rhea" id="RHEA-COMP:9928"/>
        <dbReference type="ChEBI" id="CHEBI:15378"/>
        <dbReference type="ChEBI" id="CHEBI:29969"/>
        <dbReference type="ChEBI" id="CHEBI:64479"/>
        <dbReference type="ChEBI" id="CHEBI:78463"/>
        <dbReference type="ChEBI" id="CHEBI:78809"/>
        <dbReference type="EC" id="2.3.1.181"/>
    </reaction>
</comment>
<comment type="pathway">
    <text evidence="1">Protein modification; protein lipoylation via endogenous pathway; protein N(6)-(lipoyl)lysine from octanoyl-[acyl-carrier-protein]: step 1/2.</text>
</comment>
<comment type="subcellular location">
    <subcellularLocation>
        <location evidence="1">Cytoplasm</location>
    </subcellularLocation>
</comment>
<comment type="miscellaneous">
    <text evidence="1">In the reaction, the free carboxyl group of octanoic acid is attached via an amide linkage to the epsilon-amino group of a specific lysine residue of lipoyl domains of lipoate-dependent enzymes.</text>
</comment>
<comment type="similarity">
    <text evidence="1">Belongs to the LipB family.</text>
</comment>
<evidence type="ECO:0000255" key="1">
    <source>
        <dbReference type="HAMAP-Rule" id="MF_00013"/>
    </source>
</evidence>
<evidence type="ECO:0000255" key="2">
    <source>
        <dbReference type="PROSITE-ProRule" id="PRU01067"/>
    </source>
</evidence>
<evidence type="ECO:0000256" key="3">
    <source>
        <dbReference type="SAM" id="MobiDB-lite"/>
    </source>
</evidence>
<feature type="chain" id="PRO_0000062838" description="Octanoyltransferase">
    <location>
        <begin position="1"/>
        <end position="235"/>
    </location>
</feature>
<feature type="domain" description="BPL/LPL catalytic" evidence="2">
    <location>
        <begin position="28"/>
        <end position="203"/>
    </location>
</feature>
<feature type="region of interest" description="Disordered" evidence="3">
    <location>
        <begin position="202"/>
        <end position="235"/>
    </location>
</feature>
<feature type="active site" description="Acyl-thioester intermediate" evidence="1">
    <location>
        <position position="164"/>
    </location>
</feature>
<feature type="binding site" evidence="1">
    <location>
        <begin position="66"/>
        <end position="73"/>
    </location>
    <ligand>
        <name>substrate</name>
    </ligand>
</feature>
<feature type="binding site" evidence="1">
    <location>
        <begin position="133"/>
        <end position="135"/>
    </location>
    <ligand>
        <name>substrate</name>
    </ligand>
</feature>
<feature type="binding site" evidence="1">
    <location>
        <begin position="146"/>
        <end position="148"/>
    </location>
    <ligand>
        <name>substrate</name>
    </ligand>
</feature>
<feature type="site" description="Lowers pKa of active site Cys" evidence="1">
    <location>
        <position position="130"/>
    </location>
</feature>
<keyword id="KW-0012">Acyltransferase</keyword>
<keyword id="KW-0963">Cytoplasm</keyword>
<keyword id="KW-1185">Reference proteome</keyword>
<keyword id="KW-0808">Transferase</keyword>
<name>LIPB_GEOSL</name>
<proteinExistence type="inferred from homology"/>